<dbReference type="EMBL" id="AK017032">
    <property type="protein sequence ID" value="BAB30561.1"/>
    <property type="molecule type" value="mRNA"/>
</dbReference>
<dbReference type="EMBL" id="AK076996">
    <property type="protein sequence ID" value="BAC36556.1"/>
    <property type="status" value="ALT_FRAME"/>
    <property type="molecule type" value="mRNA"/>
</dbReference>
<dbReference type="EMBL" id="BC100441">
    <property type="protein sequence ID" value="AAI00442.1"/>
    <property type="status" value="ALT_TERM"/>
    <property type="molecule type" value="mRNA"/>
</dbReference>
<dbReference type="EMBL" id="BC125429">
    <property type="protein sequence ID" value="AAI25430.1"/>
    <property type="molecule type" value="mRNA"/>
</dbReference>
<dbReference type="CCDS" id="CCDS19621.1">
    <molecule id="Q9D3V1-1"/>
</dbReference>
<dbReference type="RefSeq" id="NP_083684.1">
    <molecule id="Q9D3V1-1"/>
    <property type="nucleotide sequence ID" value="NM_029408.3"/>
</dbReference>
<dbReference type="RefSeq" id="XP_011246549.1">
    <molecule id="Q9D3V1-1"/>
    <property type="nucleotide sequence ID" value="XM_011248247.4"/>
</dbReference>
<dbReference type="SMR" id="Q9D3V1"/>
<dbReference type="FunCoup" id="Q9D3V1">
    <property type="interactions" value="183"/>
</dbReference>
<dbReference type="STRING" id="10090.ENSMUSP00000091955"/>
<dbReference type="iPTMnet" id="Q9D3V1"/>
<dbReference type="PhosphoSitePlus" id="Q9D3V1"/>
<dbReference type="PaxDb" id="10090-ENSMUSP00000091955"/>
<dbReference type="ProteomicsDB" id="267001">
    <molecule id="Q9D3V1-1"/>
</dbReference>
<dbReference type="ProteomicsDB" id="267002">
    <molecule id="Q9D3V1-2"/>
</dbReference>
<dbReference type="Antibodypedia" id="31238">
    <property type="antibodies" value="87 antibodies from 16 providers"/>
</dbReference>
<dbReference type="DNASU" id="75732"/>
<dbReference type="Ensembl" id="ENSMUST00000069259.9">
    <molecule id="Q9D3V1-2"/>
    <property type="protein sequence ID" value="ENSMUSP00000069167.3"/>
    <property type="gene ID" value="ENSMUSG00000029601.14"/>
</dbReference>
<dbReference type="Ensembl" id="ENSMUST00000094391.6">
    <molecule id="Q9D3V1-1"/>
    <property type="protein sequence ID" value="ENSMUSP00000091955.5"/>
    <property type="gene ID" value="ENSMUSG00000029601.14"/>
</dbReference>
<dbReference type="GeneID" id="75732"/>
<dbReference type="KEGG" id="mmu:75732"/>
<dbReference type="UCSC" id="uc008zho.1">
    <molecule id="Q9D3V1-1"/>
    <property type="organism name" value="mouse"/>
</dbReference>
<dbReference type="UCSC" id="uc012ecq.1">
    <molecule id="Q9D3V1-2"/>
    <property type="organism name" value="mouse"/>
</dbReference>
<dbReference type="AGR" id="MGI:1922982"/>
<dbReference type="CTD" id="115811"/>
<dbReference type="MGI" id="MGI:1922982">
    <property type="gene designation" value="Iqcd"/>
</dbReference>
<dbReference type="VEuPathDB" id="HostDB:ENSMUSG00000029601"/>
<dbReference type="eggNOG" id="ENOG502QQS9">
    <property type="taxonomic scope" value="Eukaryota"/>
</dbReference>
<dbReference type="GeneTree" id="ENSGT00730000111354"/>
<dbReference type="HOGENOM" id="CLU_637710_0_0_1"/>
<dbReference type="InParanoid" id="Q9D3V1"/>
<dbReference type="OMA" id="AKIQKYW"/>
<dbReference type="OrthoDB" id="536093at2759"/>
<dbReference type="PhylomeDB" id="Q9D3V1"/>
<dbReference type="TreeFam" id="TF326203"/>
<dbReference type="BioGRID-ORCS" id="75732">
    <property type="hits" value="5 hits in 77 CRISPR screens"/>
</dbReference>
<dbReference type="PRO" id="PR:Q9D3V1"/>
<dbReference type="Proteomes" id="UP000000589">
    <property type="component" value="Chromosome 5"/>
</dbReference>
<dbReference type="RNAct" id="Q9D3V1">
    <property type="molecule type" value="protein"/>
</dbReference>
<dbReference type="Bgee" id="ENSMUSG00000029601">
    <property type="expression patterns" value="Expressed in seminiferous tubule of testis and 70 other cell types or tissues"/>
</dbReference>
<dbReference type="ExpressionAtlas" id="Q9D3V1">
    <property type="expression patterns" value="baseline and differential"/>
</dbReference>
<dbReference type="GO" id="GO:0036064">
    <property type="term" value="C:ciliary basal body"/>
    <property type="evidence" value="ECO:0007669"/>
    <property type="project" value="Ensembl"/>
</dbReference>
<dbReference type="GO" id="GO:0005737">
    <property type="term" value="C:cytoplasm"/>
    <property type="evidence" value="ECO:0007669"/>
    <property type="project" value="UniProtKB-KW"/>
</dbReference>
<dbReference type="GO" id="GO:0031514">
    <property type="term" value="C:motile cilium"/>
    <property type="evidence" value="ECO:0007669"/>
    <property type="project" value="UniProtKB-KW"/>
</dbReference>
<dbReference type="CDD" id="cd23767">
    <property type="entry name" value="IQCD"/>
    <property type="match status" value="1"/>
</dbReference>
<dbReference type="Gene3D" id="1.20.5.190">
    <property type="match status" value="1"/>
</dbReference>
<dbReference type="InterPro" id="IPR042815">
    <property type="entry name" value="DRC10"/>
</dbReference>
<dbReference type="InterPro" id="IPR000048">
    <property type="entry name" value="IQ_motif_EF-hand-BS"/>
</dbReference>
<dbReference type="PANTHER" id="PTHR31598:SF1">
    <property type="entry name" value="DYNEIN REGULATORY COMPLEX PROTEIN 10"/>
    <property type="match status" value="1"/>
</dbReference>
<dbReference type="PANTHER" id="PTHR31598">
    <property type="entry name" value="IQ DOMAIN-CONTAINING PROTEIN D"/>
    <property type="match status" value="1"/>
</dbReference>
<dbReference type="Pfam" id="PF00612">
    <property type="entry name" value="IQ"/>
    <property type="match status" value="1"/>
</dbReference>
<dbReference type="SMART" id="SM00015">
    <property type="entry name" value="IQ"/>
    <property type="match status" value="1"/>
</dbReference>
<dbReference type="PROSITE" id="PS50096">
    <property type="entry name" value="IQ"/>
    <property type="match status" value="1"/>
</dbReference>
<feature type="chain" id="PRO_0000282550" description="Dynein regulatory complex protein 10">
    <location>
        <begin position="1"/>
        <end position="458"/>
    </location>
</feature>
<feature type="domain" description="IQ" evidence="4">
    <location>
        <begin position="397"/>
        <end position="426"/>
    </location>
</feature>
<feature type="region of interest" description="Disordered" evidence="5">
    <location>
        <begin position="419"/>
        <end position="458"/>
    </location>
</feature>
<feature type="coiled-coil region" evidence="3">
    <location>
        <begin position="96"/>
        <end position="137"/>
    </location>
</feature>
<feature type="coiled-coil region" evidence="3">
    <location>
        <begin position="209"/>
        <end position="255"/>
    </location>
</feature>
<feature type="coiled-coil region" evidence="3">
    <location>
        <begin position="285"/>
        <end position="379"/>
    </location>
</feature>
<feature type="compositionally biased region" description="Basic and acidic residues" evidence="5">
    <location>
        <begin position="428"/>
        <end position="445"/>
    </location>
</feature>
<feature type="compositionally biased region" description="Basic residues" evidence="5">
    <location>
        <begin position="446"/>
        <end position="458"/>
    </location>
</feature>
<feature type="splice variant" id="VSP_024181" description="In isoform 2." evidence="6">
    <location>
        <begin position="286"/>
        <end position="318"/>
    </location>
</feature>
<feature type="sequence conflict" description="In Ref. 1; BAC36556." evidence="7" ref="1">
    <original>E</original>
    <variation>A</variation>
    <location>
        <position position="324"/>
    </location>
</feature>
<feature type="sequence conflict" description="In Ref. 1; BAC36556." evidence="7" ref="1">
    <original>GEKQDE</original>
    <variation>CDNQPK</variation>
    <location>
        <begin position="339"/>
        <end position="344"/>
    </location>
</feature>
<feature type="sequence conflict" description="In Ref. 1; BAC36556." evidence="7" ref="1">
    <original>D</original>
    <variation>G</variation>
    <location>
        <position position="431"/>
    </location>
</feature>
<evidence type="ECO:0000250" key="1">
    <source>
        <dbReference type="UniProtKB" id="A8J0N6"/>
    </source>
</evidence>
<evidence type="ECO:0000250" key="2">
    <source>
        <dbReference type="UniProtKB" id="F1RKB1"/>
    </source>
</evidence>
<evidence type="ECO:0000255" key="3"/>
<evidence type="ECO:0000255" key="4">
    <source>
        <dbReference type="PROSITE-ProRule" id="PRU00116"/>
    </source>
</evidence>
<evidence type="ECO:0000256" key="5">
    <source>
        <dbReference type="SAM" id="MobiDB-lite"/>
    </source>
</evidence>
<evidence type="ECO:0000303" key="6">
    <source>
    </source>
</evidence>
<evidence type="ECO:0000305" key="7"/>
<accession>Q9D3V1</accession>
<accession>Q497P6</accession>
<accession>Q8C5X0</accession>
<gene>
    <name type="primary">Iqcd</name>
    <name evidence="1" type="synonym">Drc10</name>
</gene>
<name>DRC10_MOUSE</name>
<keyword id="KW-0025">Alternative splicing</keyword>
<keyword id="KW-0966">Cell projection</keyword>
<keyword id="KW-0969">Cilium</keyword>
<keyword id="KW-0175">Coiled coil</keyword>
<keyword id="KW-0963">Cytoplasm</keyword>
<keyword id="KW-0206">Cytoskeleton</keyword>
<keyword id="KW-0282">Flagellum</keyword>
<keyword id="KW-1185">Reference proteome</keyword>
<proteinExistence type="evidence at transcript level"/>
<comment type="function">
    <text evidence="1">Component of the nexin-dynein regulatory complex (N-DRC), a key regulator of ciliary/flagellar motility which maintains the alignment and integrity of the distal axoneme and regulates microtubule sliding in motile axonemes.</text>
</comment>
<comment type="subunit">
    <text evidence="1 2">Component of the nexin-dynein regulatory complex (N-DRC). Interacts with CFAP52 (By similarity).</text>
</comment>
<comment type="subcellular location">
    <subcellularLocation>
        <location evidence="1">Cytoplasm</location>
        <location evidence="1">Cytoskeleton</location>
        <location evidence="1">Flagellum axoneme</location>
    </subcellularLocation>
</comment>
<comment type="alternative products">
    <event type="alternative splicing"/>
    <isoform>
        <id>Q9D3V1-1</id>
        <name>1</name>
        <sequence type="displayed"/>
    </isoform>
    <isoform>
        <id>Q9D3V1-2</id>
        <name>2</name>
        <sequence type="described" ref="VSP_024181"/>
    </isoform>
</comment>
<comment type="similarity">
    <text evidence="7">Belongs to the DRC10 family.</text>
</comment>
<comment type="sequence caution" evidence="7">
    <conflict type="frameshift">
        <sequence resource="EMBL-CDS" id="BAC36556"/>
    </conflict>
</comment>
<sequence>MALDQVSIPPSYHGLAIQRIPLRTGLVPAEPMKTLVPSKSKLNTIEAKRIMSVLDEAIHKIELITLMSYMESHPEALEDTLPEDFVRALREHLDIGQTLVERASILQRRHKKLEEEEEAEETRNQERLLSLELHKVNLLTLAHQFRDSTKTVLRLVLGEPQFTRLLQVQAPGRSPGAQCLLDGLVELRGFLFEKLLTSPMEVREKNQFIQDISRRSERNQEVIDDLQAELANVLKNKESEVEKENFVIQELKNHLHQVFKFSENSLLRTKQEAEKQQKVDFRASQVRLAKTQQDILALRAQYHNLVMENREAEQALRKKKYKVETEIENWIQKYDMEMGEKQDEYEDLESIHKEEKLQLEELRERHAVLVEEFSQIRAESEINSKKRVEAEREMVRMVRAATLIQAVWKGYLVRSILRSKKKKRGKGKGKDKGKGKEKPKEEKAKEKKPKAKGKGKKK</sequence>
<reference key="1">
    <citation type="journal article" date="2005" name="Science">
        <title>The transcriptional landscape of the mammalian genome.</title>
        <authorList>
            <person name="Carninci P."/>
            <person name="Kasukawa T."/>
            <person name="Katayama S."/>
            <person name="Gough J."/>
            <person name="Frith M.C."/>
            <person name="Maeda N."/>
            <person name="Oyama R."/>
            <person name="Ravasi T."/>
            <person name="Lenhard B."/>
            <person name="Wells C."/>
            <person name="Kodzius R."/>
            <person name="Shimokawa K."/>
            <person name="Bajic V.B."/>
            <person name="Brenner S.E."/>
            <person name="Batalov S."/>
            <person name="Forrest A.R."/>
            <person name="Zavolan M."/>
            <person name="Davis M.J."/>
            <person name="Wilming L.G."/>
            <person name="Aidinis V."/>
            <person name="Allen J.E."/>
            <person name="Ambesi-Impiombato A."/>
            <person name="Apweiler R."/>
            <person name="Aturaliya R.N."/>
            <person name="Bailey T.L."/>
            <person name="Bansal M."/>
            <person name="Baxter L."/>
            <person name="Beisel K.W."/>
            <person name="Bersano T."/>
            <person name="Bono H."/>
            <person name="Chalk A.M."/>
            <person name="Chiu K.P."/>
            <person name="Choudhary V."/>
            <person name="Christoffels A."/>
            <person name="Clutterbuck D.R."/>
            <person name="Crowe M.L."/>
            <person name="Dalla E."/>
            <person name="Dalrymple B.P."/>
            <person name="de Bono B."/>
            <person name="Della Gatta G."/>
            <person name="di Bernardo D."/>
            <person name="Down T."/>
            <person name="Engstrom P."/>
            <person name="Fagiolini M."/>
            <person name="Faulkner G."/>
            <person name="Fletcher C.F."/>
            <person name="Fukushima T."/>
            <person name="Furuno M."/>
            <person name="Futaki S."/>
            <person name="Gariboldi M."/>
            <person name="Georgii-Hemming P."/>
            <person name="Gingeras T.R."/>
            <person name="Gojobori T."/>
            <person name="Green R.E."/>
            <person name="Gustincich S."/>
            <person name="Harbers M."/>
            <person name="Hayashi Y."/>
            <person name="Hensch T.K."/>
            <person name="Hirokawa N."/>
            <person name="Hill D."/>
            <person name="Huminiecki L."/>
            <person name="Iacono M."/>
            <person name="Ikeo K."/>
            <person name="Iwama A."/>
            <person name="Ishikawa T."/>
            <person name="Jakt M."/>
            <person name="Kanapin A."/>
            <person name="Katoh M."/>
            <person name="Kawasawa Y."/>
            <person name="Kelso J."/>
            <person name="Kitamura H."/>
            <person name="Kitano H."/>
            <person name="Kollias G."/>
            <person name="Krishnan S.P."/>
            <person name="Kruger A."/>
            <person name="Kummerfeld S.K."/>
            <person name="Kurochkin I.V."/>
            <person name="Lareau L.F."/>
            <person name="Lazarevic D."/>
            <person name="Lipovich L."/>
            <person name="Liu J."/>
            <person name="Liuni S."/>
            <person name="McWilliam S."/>
            <person name="Madan Babu M."/>
            <person name="Madera M."/>
            <person name="Marchionni L."/>
            <person name="Matsuda H."/>
            <person name="Matsuzawa S."/>
            <person name="Miki H."/>
            <person name="Mignone F."/>
            <person name="Miyake S."/>
            <person name="Morris K."/>
            <person name="Mottagui-Tabar S."/>
            <person name="Mulder N."/>
            <person name="Nakano N."/>
            <person name="Nakauchi H."/>
            <person name="Ng P."/>
            <person name="Nilsson R."/>
            <person name="Nishiguchi S."/>
            <person name="Nishikawa S."/>
            <person name="Nori F."/>
            <person name="Ohara O."/>
            <person name="Okazaki Y."/>
            <person name="Orlando V."/>
            <person name="Pang K.C."/>
            <person name="Pavan W.J."/>
            <person name="Pavesi G."/>
            <person name="Pesole G."/>
            <person name="Petrovsky N."/>
            <person name="Piazza S."/>
            <person name="Reed J."/>
            <person name="Reid J.F."/>
            <person name="Ring B.Z."/>
            <person name="Ringwald M."/>
            <person name="Rost B."/>
            <person name="Ruan Y."/>
            <person name="Salzberg S.L."/>
            <person name="Sandelin A."/>
            <person name="Schneider C."/>
            <person name="Schoenbach C."/>
            <person name="Sekiguchi K."/>
            <person name="Semple C.A."/>
            <person name="Seno S."/>
            <person name="Sessa L."/>
            <person name="Sheng Y."/>
            <person name="Shibata Y."/>
            <person name="Shimada H."/>
            <person name="Shimada K."/>
            <person name="Silva D."/>
            <person name="Sinclair B."/>
            <person name="Sperling S."/>
            <person name="Stupka E."/>
            <person name="Sugiura K."/>
            <person name="Sultana R."/>
            <person name="Takenaka Y."/>
            <person name="Taki K."/>
            <person name="Tammoja K."/>
            <person name="Tan S.L."/>
            <person name="Tang S."/>
            <person name="Taylor M.S."/>
            <person name="Tegner J."/>
            <person name="Teichmann S.A."/>
            <person name="Ueda H.R."/>
            <person name="van Nimwegen E."/>
            <person name="Verardo R."/>
            <person name="Wei C.L."/>
            <person name="Yagi K."/>
            <person name="Yamanishi H."/>
            <person name="Zabarovsky E."/>
            <person name="Zhu S."/>
            <person name="Zimmer A."/>
            <person name="Hide W."/>
            <person name="Bult C."/>
            <person name="Grimmond S.M."/>
            <person name="Teasdale R.D."/>
            <person name="Liu E.T."/>
            <person name="Brusic V."/>
            <person name="Quackenbush J."/>
            <person name="Wahlestedt C."/>
            <person name="Mattick J.S."/>
            <person name="Hume D.A."/>
            <person name="Kai C."/>
            <person name="Sasaki D."/>
            <person name="Tomaru Y."/>
            <person name="Fukuda S."/>
            <person name="Kanamori-Katayama M."/>
            <person name="Suzuki M."/>
            <person name="Aoki J."/>
            <person name="Arakawa T."/>
            <person name="Iida J."/>
            <person name="Imamura K."/>
            <person name="Itoh M."/>
            <person name="Kato T."/>
            <person name="Kawaji H."/>
            <person name="Kawagashira N."/>
            <person name="Kawashima T."/>
            <person name="Kojima M."/>
            <person name="Kondo S."/>
            <person name="Konno H."/>
            <person name="Nakano K."/>
            <person name="Ninomiya N."/>
            <person name="Nishio T."/>
            <person name="Okada M."/>
            <person name="Plessy C."/>
            <person name="Shibata K."/>
            <person name="Shiraki T."/>
            <person name="Suzuki S."/>
            <person name="Tagami M."/>
            <person name="Waki K."/>
            <person name="Watahiki A."/>
            <person name="Okamura-Oho Y."/>
            <person name="Suzuki H."/>
            <person name="Kawai J."/>
            <person name="Hayashizaki Y."/>
        </authorList>
    </citation>
    <scope>NUCLEOTIDE SEQUENCE [LARGE SCALE MRNA] (ISOFORMS 1 AND 2)</scope>
    <source>
        <strain>C57BL/6J</strain>
        <tissue>Testis</tissue>
    </source>
</reference>
<reference key="2">
    <citation type="journal article" date="2004" name="Genome Res.">
        <title>The status, quality, and expansion of the NIH full-length cDNA project: the Mammalian Gene Collection (MGC).</title>
        <authorList>
            <consortium name="The MGC Project Team"/>
        </authorList>
    </citation>
    <scope>NUCLEOTIDE SEQUENCE [LARGE SCALE MRNA] (ISOFORM 1)</scope>
    <source>
        <tissue>Brain</tissue>
        <tissue>Testis</tissue>
    </source>
</reference>
<protein>
    <recommendedName>
        <fullName evidence="1">Dynein regulatory complex protein 10</fullName>
    </recommendedName>
    <alternativeName>
        <fullName>IQ domain-containing protein D</fullName>
    </alternativeName>
</protein>
<organism>
    <name type="scientific">Mus musculus</name>
    <name type="common">Mouse</name>
    <dbReference type="NCBI Taxonomy" id="10090"/>
    <lineage>
        <taxon>Eukaryota</taxon>
        <taxon>Metazoa</taxon>
        <taxon>Chordata</taxon>
        <taxon>Craniata</taxon>
        <taxon>Vertebrata</taxon>
        <taxon>Euteleostomi</taxon>
        <taxon>Mammalia</taxon>
        <taxon>Eutheria</taxon>
        <taxon>Euarchontoglires</taxon>
        <taxon>Glires</taxon>
        <taxon>Rodentia</taxon>
        <taxon>Myomorpha</taxon>
        <taxon>Muroidea</taxon>
        <taxon>Muridae</taxon>
        <taxon>Murinae</taxon>
        <taxon>Mus</taxon>
        <taxon>Mus</taxon>
    </lineage>
</organism>